<proteinExistence type="inferred from homology"/>
<organism>
    <name type="scientific">Shewanella baltica (strain OS155 / ATCC BAA-1091)</name>
    <dbReference type="NCBI Taxonomy" id="325240"/>
    <lineage>
        <taxon>Bacteria</taxon>
        <taxon>Pseudomonadati</taxon>
        <taxon>Pseudomonadota</taxon>
        <taxon>Gammaproteobacteria</taxon>
        <taxon>Alteromonadales</taxon>
        <taxon>Shewanellaceae</taxon>
        <taxon>Shewanella</taxon>
    </lineage>
</organism>
<comment type="function">
    <text evidence="1">Catalyzes the condensation of pantoate with beta-alanine in an ATP-dependent reaction via a pantoyl-adenylate intermediate.</text>
</comment>
<comment type="catalytic activity">
    <reaction evidence="1">
        <text>(R)-pantoate + beta-alanine + ATP = (R)-pantothenate + AMP + diphosphate + H(+)</text>
        <dbReference type="Rhea" id="RHEA:10912"/>
        <dbReference type="ChEBI" id="CHEBI:15378"/>
        <dbReference type="ChEBI" id="CHEBI:15980"/>
        <dbReference type="ChEBI" id="CHEBI:29032"/>
        <dbReference type="ChEBI" id="CHEBI:30616"/>
        <dbReference type="ChEBI" id="CHEBI:33019"/>
        <dbReference type="ChEBI" id="CHEBI:57966"/>
        <dbReference type="ChEBI" id="CHEBI:456215"/>
        <dbReference type="EC" id="6.3.2.1"/>
    </reaction>
</comment>
<comment type="pathway">
    <text evidence="1">Cofactor biosynthesis; (R)-pantothenate biosynthesis; (R)-pantothenate from (R)-pantoate and beta-alanine: step 1/1.</text>
</comment>
<comment type="subunit">
    <text evidence="1">Homodimer.</text>
</comment>
<comment type="subcellular location">
    <subcellularLocation>
        <location evidence="1">Cytoplasm</location>
    </subcellularLocation>
</comment>
<comment type="miscellaneous">
    <text evidence="1">The reaction proceeds by a bi uni uni bi ping pong mechanism.</text>
</comment>
<comment type="similarity">
    <text evidence="1">Belongs to the pantothenate synthetase family.</text>
</comment>
<name>PANC_SHEB5</name>
<reference key="1">
    <citation type="submission" date="2007-02" db="EMBL/GenBank/DDBJ databases">
        <title>Complete sequence of chromosome of Shewanella baltica OS155.</title>
        <authorList>
            <consortium name="US DOE Joint Genome Institute"/>
            <person name="Copeland A."/>
            <person name="Lucas S."/>
            <person name="Lapidus A."/>
            <person name="Barry K."/>
            <person name="Detter J.C."/>
            <person name="Glavina del Rio T."/>
            <person name="Hammon N."/>
            <person name="Israni S."/>
            <person name="Dalin E."/>
            <person name="Tice H."/>
            <person name="Pitluck S."/>
            <person name="Sims D.R."/>
            <person name="Brettin T."/>
            <person name="Bruce D."/>
            <person name="Han C."/>
            <person name="Tapia R."/>
            <person name="Brainard J."/>
            <person name="Schmutz J."/>
            <person name="Larimer F."/>
            <person name="Land M."/>
            <person name="Hauser L."/>
            <person name="Kyrpides N."/>
            <person name="Mikhailova N."/>
            <person name="Brettar I."/>
            <person name="Klappenbach J."/>
            <person name="Konstantinidis K."/>
            <person name="Rodrigues J."/>
            <person name="Tiedje J."/>
            <person name="Richardson P."/>
        </authorList>
    </citation>
    <scope>NUCLEOTIDE SEQUENCE [LARGE SCALE GENOMIC DNA]</scope>
    <source>
        <strain>OS155 / ATCC BAA-1091</strain>
    </source>
</reference>
<keyword id="KW-0067">ATP-binding</keyword>
<keyword id="KW-0963">Cytoplasm</keyword>
<keyword id="KW-0436">Ligase</keyword>
<keyword id="KW-0547">Nucleotide-binding</keyword>
<keyword id="KW-0566">Pantothenate biosynthesis</keyword>
<keyword id="KW-1185">Reference proteome</keyword>
<accession>A3D8A9</accession>
<protein>
    <recommendedName>
        <fullName evidence="1">Pantothenate synthetase</fullName>
        <shortName evidence="1">PS</shortName>
        <ecNumber evidence="1">6.3.2.1</ecNumber>
    </recommendedName>
    <alternativeName>
        <fullName evidence="1">Pantoate--beta-alanine ligase</fullName>
    </alternativeName>
    <alternativeName>
        <fullName evidence="1">Pantoate-activating enzyme</fullName>
    </alternativeName>
</protein>
<feature type="chain" id="PRO_1000097108" description="Pantothenate synthetase">
    <location>
        <begin position="1"/>
        <end position="281"/>
    </location>
</feature>
<feature type="active site" description="Proton donor" evidence="1">
    <location>
        <position position="37"/>
    </location>
</feature>
<feature type="binding site" evidence="1">
    <location>
        <begin position="30"/>
        <end position="37"/>
    </location>
    <ligand>
        <name>ATP</name>
        <dbReference type="ChEBI" id="CHEBI:30616"/>
    </ligand>
</feature>
<feature type="binding site" evidence="1">
    <location>
        <position position="61"/>
    </location>
    <ligand>
        <name>(R)-pantoate</name>
        <dbReference type="ChEBI" id="CHEBI:15980"/>
    </ligand>
</feature>
<feature type="binding site" evidence="1">
    <location>
        <position position="61"/>
    </location>
    <ligand>
        <name>beta-alanine</name>
        <dbReference type="ChEBI" id="CHEBI:57966"/>
    </ligand>
</feature>
<feature type="binding site" evidence="1">
    <location>
        <begin position="149"/>
        <end position="152"/>
    </location>
    <ligand>
        <name>ATP</name>
        <dbReference type="ChEBI" id="CHEBI:30616"/>
    </ligand>
</feature>
<feature type="binding site" evidence="1">
    <location>
        <position position="155"/>
    </location>
    <ligand>
        <name>(R)-pantoate</name>
        <dbReference type="ChEBI" id="CHEBI:15980"/>
    </ligand>
</feature>
<feature type="binding site" evidence="1">
    <location>
        <position position="178"/>
    </location>
    <ligand>
        <name>ATP</name>
        <dbReference type="ChEBI" id="CHEBI:30616"/>
    </ligand>
</feature>
<feature type="binding site" evidence="1">
    <location>
        <begin position="186"/>
        <end position="189"/>
    </location>
    <ligand>
        <name>ATP</name>
        <dbReference type="ChEBI" id="CHEBI:30616"/>
    </ligand>
</feature>
<evidence type="ECO:0000255" key="1">
    <source>
        <dbReference type="HAMAP-Rule" id="MF_00158"/>
    </source>
</evidence>
<dbReference type="EC" id="6.3.2.1" evidence="1"/>
<dbReference type="EMBL" id="CP000563">
    <property type="protein sequence ID" value="ABN62972.1"/>
    <property type="molecule type" value="Genomic_DNA"/>
</dbReference>
<dbReference type="RefSeq" id="WP_011847699.1">
    <property type="nucleotide sequence ID" value="NC_009052.1"/>
</dbReference>
<dbReference type="SMR" id="A3D8A9"/>
<dbReference type="STRING" id="325240.Sbal_3495"/>
<dbReference type="KEGG" id="sbl:Sbal_3495"/>
<dbReference type="HOGENOM" id="CLU_047148_0_0_6"/>
<dbReference type="OrthoDB" id="9773087at2"/>
<dbReference type="UniPathway" id="UPA00028">
    <property type="reaction ID" value="UER00005"/>
</dbReference>
<dbReference type="Proteomes" id="UP000001557">
    <property type="component" value="Chromosome"/>
</dbReference>
<dbReference type="GO" id="GO:0005829">
    <property type="term" value="C:cytosol"/>
    <property type="evidence" value="ECO:0007669"/>
    <property type="project" value="TreeGrafter"/>
</dbReference>
<dbReference type="GO" id="GO:0005524">
    <property type="term" value="F:ATP binding"/>
    <property type="evidence" value="ECO:0007669"/>
    <property type="project" value="UniProtKB-KW"/>
</dbReference>
<dbReference type="GO" id="GO:0004592">
    <property type="term" value="F:pantoate-beta-alanine ligase activity"/>
    <property type="evidence" value="ECO:0007669"/>
    <property type="project" value="UniProtKB-UniRule"/>
</dbReference>
<dbReference type="GO" id="GO:0015940">
    <property type="term" value="P:pantothenate biosynthetic process"/>
    <property type="evidence" value="ECO:0007669"/>
    <property type="project" value="UniProtKB-UniRule"/>
</dbReference>
<dbReference type="CDD" id="cd00560">
    <property type="entry name" value="PanC"/>
    <property type="match status" value="1"/>
</dbReference>
<dbReference type="FunFam" id="3.40.50.620:FF:000013">
    <property type="entry name" value="Pantothenate synthetase"/>
    <property type="match status" value="1"/>
</dbReference>
<dbReference type="Gene3D" id="3.40.50.620">
    <property type="entry name" value="HUPs"/>
    <property type="match status" value="1"/>
</dbReference>
<dbReference type="Gene3D" id="3.30.1300.10">
    <property type="entry name" value="Pantoate-beta-alanine ligase, C-terminal domain"/>
    <property type="match status" value="1"/>
</dbReference>
<dbReference type="HAMAP" id="MF_00158">
    <property type="entry name" value="PanC"/>
    <property type="match status" value="1"/>
</dbReference>
<dbReference type="InterPro" id="IPR004821">
    <property type="entry name" value="Cyt_trans-like"/>
</dbReference>
<dbReference type="InterPro" id="IPR003721">
    <property type="entry name" value="Pantoate_ligase"/>
</dbReference>
<dbReference type="InterPro" id="IPR042176">
    <property type="entry name" value="Pantoate_ligase_C"/>
</dbReference>
<dbReference type="InterPro" id="IPR014729">
    <property type="entry name" value="Rossmann-like_a/b/a_fold"/>
</dbReference>
<dbReference type="NCBIfam" id="TIGR00125">
    <property type="entry name" value="cyt_tran_rel"/>
    <property type="match status" value="1"/>
</dbReference>
<dbReference type="NCBIfam" id="TIGR00018">
    <property type="entry name" value="panC"/>
    <property type="match status" value="1"/>
</dbReference>
<dbReference type="PANTHER" id="PTHR21299">
    <property type="entry name" value="CYTIDYLATE KINASE/PANTOATE-BETA-ALANINE LIGASE"/>
    <property type="match status" value="1"/>
</dbReference>
<dbReference type="PANTHER" id="PTHR21299:SF1">
    <property type="entry name" value="PANTOATE--BETA-ALANINE LIGASE"/>
    <property type="match status" value="1"/>
</dbReference>
<dbReference type="Pfam" id="PF02569">
    <property type="entry name" value="Pantoate_ligase"/>
    <property type="match status" value="1"/>
</dbReference>
<dbReference type="SUPFAM" id="SSF52374">
    <property type="entry name" value="Nucleotidylyl transferase"/>
    <property type="match status" value="1"/>
</dbReference>
<sequence length="281" mass="30388">MITSAHIDDIRTQVRAWRAKGETVAFVPTMGNLHQGHITLVKEAASKCDHVVASIFVNPMQFGQNEDLDAYPRTLAADSEALTAAGAELLFTPTPAVMYPKGLEQQTYVEVPGISNVLCGASRPGHFRGVATIVCKLFNIVQPDVALFGNKDYQQLLVIKTMVEDLSLPIEIIGVDTIREDSGLAMSSRNGYLTAAEKAAAPALKQAIDAMAAGIKQGESFEQVTEQAKASLIAAGFTPDYLEIRHAHTLEQAQNQHQALVILTAAYIGKARLIDNLRFDS</sequence>
<gene>
    <name evidence="1" type="primary">panC</name>
    <name type="ordered locus">Sbal_3495</name>
</gene>